<name>UFSP2_RAT</name>
<reference key="1">
    <citation type="journal article" date="2004" name="Genome Res.">
        <title>The status, quality, and expansion of the NIH full-length cDNA project: the Mammalian Gene Collection (MGC).</title>
        <authorList>
            <consortium name="The MGC Project Team"/>
        </authorList>
    </citation>
    <scope>NUCLEOTIDE SEQUENCE [LARGE SCALE MRNA]</scope>
    <source>
        <tissue>Heart</tissue>
    </source>
</reference>
<evidence type="ECO:0000250" key="1">
    <source>
        <dbReference type="UniProtKB" id="Q99K23"/>
    </source>
</evidence>
<evidence type="ECO:0000250" key="2">
    <source>
        <dbReference type="UniProtKB" id="Q9NUQ7"/>
    </source>
</evidence>
<evidence type="ECO:0000305" key="3"/>
<evidence type="ECO:0000312" key="4">
    <source>
        <dbReference type="RGD" id="1311161"/>
    </source>
</evidence>
<sequence length="461" mass="52307">MDILFRIRGGFDLAFQLAPPKEMFIKNALRQVLNDLTTKLSSDALVFRICNSSVYLWPNSDANTGELTDSSACKSVVDLIQFDQEEDTKRKFMKKKDKKLTDMQQIVNIDLMLEISTPLGAVTPIIERENEEHHYINMSLPIDAVVSVAPEETWGKVRKLLVDAILNQLVDVEKCILRYMKGTSIVVPEPLHFLLPGGKNLVTVLYPSGIPDDQLQAYRKELHDLFKLPHDRPYLKRINAYHFPDELYKDGYIRNPHAYLSPPNIEGSMICMVQGTYAYHHYMQNRVDDNGWGCAYRSLQTVCSWFRHQGYTERAIPTHREIQQALVDAGDKPATFVGSRQWIGSIEVQLVLNQLIGVTSKILFVNQGSEMASQGRELANHFQNVGTPVMIGGGVLAHTILGVAWNETTGQIKFLILDPHYTGAEDLQVILEKGWCGWKGPDFWNKDAYYNLCLPQRPNAL</sequence>
<keyword id="KW-0963">Cytoplasm</keyword>
<keyword id="KW-0256">Endoplasmic reticulum</keyword>
<keyword id="KW-0378">Hydrolase</keyword>
<keyword id="KW-0539">Nucleus</keyword>
<keyword id="KW-0645">Protease</keyword>
<keyword id="KW-1185">Reference proteome</keyword>
<keyword id="KW-0788">Thiol protease</keyword>
<keyword id="KW-0833">Ubl conjugation pathway</keyword>
<comment type="function">
    <text evidence="2">Thiol-dependent isopeptidase that specifically cleaves UFM1, a ubiquitin-like modifier protein, from conjugated proteins, such as CD274/PD-L1, CYB5R3, DDRGK1, MRE11, RPL26/uL24, TRIP4 and RPL26/uL24. While it is also able to mediate the processing of UFM1 precursors, a prerequisite for conjugation reactions, UFSP2 mainly acts as a protein deUFMylase that mediates deconjugation of UFM1 from target proteins. Mediates deUFMylation of RPL26/uL24, a critical step to release the UFM1 ribosome E3 ligase (UREL) complex during the recycling of 60S ribosome subunits from the endoplasmic reticulum. Catalyzes deUFMylation of TRIP4, regulating intracellular nuclear receptors transactivation and thereby regulate cell proliferation and differentiation.</text>
</comment>
<comment type="subcellular location">
    <subcellularLocation>
        <location evidence="1">Endoplasmic reticulum</location>
    </subcellularLocation>
    <subcellularLocation>
        <location evidence="1">Cytoplasm</location>
    </subcellularLocation>
    <subcellularLocation>
        <location evidence="1">Nucleus</location>
    </subcellularLocation>
</comment>
<comment type="similarity">
    <text evidence="3">Belongs to the peptidase C78 family.</text>
</comment>
<gene>
    <name evidence="4" type="primary">Ufsp2</name>
</gene>
<organism>
    <name type="scientific">Rattus norvegicus</name>
    <name type="common">Rat</name>
    <dbReference type="NCBI Taxonomy" id="10116"/>
    <lineage>
        <taxon>Eukaryota</taxon>
        <taxon>Metazoa</taxon>
        <taxon>Chordata</taxon>
        <taxon>Craniata</taxon>
        <taxon>Vertebrata</taxon>
        <taxon>Euteleostomi</taxon>
        <taxon>Mammalia</taxon>
        <taxon>Eutheria</taxon>
        <taxon>Euarchontoglires</taxon>
        <taxon>Glires</taxon>
        <taxon>Rodentia</taxon>
        <taxon>Myomorpha</taxon>
        <taxon>Muroidea</taxon>
        <taxon>Muridae</taxon>
        <taxon>Murinae</taxon>
        <taxon>Rattus</taxon>
    </lineage>
</organism>
<accession>Q5XIB4</accession>
<feature type="chain" id="PRO_0000280365" description="Ufm1-specific protease 2">
    <location>
        <begin position="1"/>
        <end position="461"/>
    </location>
</feature>
<feature type="active site" evidence="1">
    <location>
        <position position="294"/>
    </location>
</feature>
<feature type="active site" evidence="1">
    <location>
        <position position="418"/>
    </location>
</feature>
<feature type="active site" evidence="1">
    <location>
        <position position="420"/>
    </location>
</feature>
<dbReference type="EC" id="3.4.22.-" evidence="2"/>
<dbReference type="EMBL" id="BC083771">
    <property type="protein sequence ID" value="AAH83771.1"/>
    <property type="molecule type" value="mRNA"/>
</dbReference>
<dbReference type="RefSeq" id="NP_001014164.1">
    <property type="nucleotide sequence ID" value="NM_001014142.1"/>
</dbReference>
<dbReference type="RefSeq" id="XP_008769487.1">
    <property type="nucleotide sequence ID" value="XM_008771265.4"/>
</dbReference>
<dbReference type="SMR" id="Q5XIB4"/>
<dbReference type="FunCoup" id="Q5XIB4">
    <property type="interactions" value="1063"/>
</dbReference>
<dbReference type="STRING" id="10116.ENSRNOP00000016723"/>
<dbReference type="MEROPS" id="C78.002"/>
<dbReference type="PhosphoSitePlus" id="Q5XIB4"/>
<dbReference type="jPOST" id="Q5XIB4"/>
<dbReference type="PaxDb" id="10116-ENSRNOP00000016723"/>
<dbReference type="Ensembl" id="ENSRNOT00000016723.7">
    <property type="protein sequence ID" value="ENSRNOP00000016723.4"/>
    <property type="gene ID" value="ENSRNOG00000012087.7"/>
</dbReference>
<dbReference type="GeneID" id="361151"/>
<dbReference type="KEGG" id="rno:361151"/>
<dbReference type="AGR" id="RGD:1311161"/>
<dbReference type="CTD" id="55325"/>
<dbReference type="RGD" id="1311161">
    <property type="gene designation" value="Ufsp2"/>
</dbReference>
<dbReference type="eggNOG" id="KOG2433">
    <property type="taxonomic scope" value="Eukaryota"/>
</dbReference>
<dbReference type="GeneTree" id="ENSGT00940000157115"/>
<dbReference type="HOGENOM" id="CLU_021066_1_1_1"/>
<dbReference type="InParanoid" id="Q5XIB4"/>
<dbReference type="OMA" id="MDILFRV"/>
<dbReference type="OrthoDB" id="23099at9989"/>
<dbReference type="PhylomeDB" id="Q5XIB4"/>
<dbReference type="TreeFam" id="TF325896"/>
<dbReference type="PRO" id="PR:Q5XIB4"/>
<dbReference type="Proteomes" id="UP000002494">
    <property type="component" value="Chromosome 16"/>
</dbReference>
<dbReference type="Bgee" id="ENSRNOG00000012087">
    <property type="expression patterns" value="Expressed in pancreas and 20 other cell types or tissues"/>
</dbReference>
<dbReference type="GO" id="GO:0005737">
    <property type="term" value="C:cytoplasm"/>
    <property type="evidence" value="ECO:0000250"/>
    <property type="project" value="UniProtKB"/>
</dbReference>
<dbReference type="GO" id="GO:0005783">
    <property type="term" value="C:endoplasmic reticulum"/>
    <property type="evidence" value="ECO:0000250"/>
    <property type="project" value="UniProtKB"/>
</dbReference>
<dbReference type="GO" id="GO:0005634">
    <property type="term" value="C:nucleus"/>
    <property type="evidence" value="ECO:0000250"/>
    <property type="project" value="UniProtKB"/>
</dbReference>
<dbReference type="GO" id="GO:0071567">
    <property type="term" value="F:deUFMylase activity"/>
    <property type="evidence" value="ECO:0000250"/>
    <property type="project" value="UniProtKB"/>
</dbReference>
<dbReference type="GO" id="GO:1903051">
    <property type="term" value="P:negative regulation of proteolysis involved in protein catabolic process"/>
    <property type="evidence" value="ECO:0000266"/>
    <property type="project" value="RGD"/>
</dbReference>
<dbReference type="GO" id="GO:0006508">
    <property type="term" value="P:proteolysis"/>
    <property type="evidence" value="ECO:0000250"/>
    <property type="project" value="UniProtKB"/>
</dbReference>
<dbReference type="GO" id="GO:0033146">
    <property type="term" value="P:regulation of intracellular estrogen receptor signaling pathway"/>
    <property type="evidence" value="ECO:0000250"/>
    <property type="project" value="UniProtKB"/>
</dbReference>
<dbReference type="GO" id="GO:0032649">
    <property type="term" value="P:regulation of type II interferon production"/>
    <property type="evidence" value="ECO:0000266"/>
    <property type="project" value="RGD"/>
</dbReference>
<dbReference type="GO" id="GO:0072344">
    <property type="term" value="P:rescue of stalled ribosome"/>
    <property type="evidence" value="ECO:0000266"/>
    <property type="project" value="RGD"/>
</dbReference>
<dbReference type="GO" id="GO:0032790">
    <property type="term" value="P:ribosome disassembly"/>
    <property type="evidence" value="ECO:0000250"/>
    <property type="project" value="UniProtKB"/>
</dbReference>
<dbReference type="FunFam" id="3.90.70.130:FF:000001">
    <property type="entry name" value="Probable Ufm1-specific protease 2"/>
    <property type="match status" value="1"/>
</dbReference>
<dbReference type="Gene3D" id="3.90.70.130">
    <property type="match status" value="1"/>
</dbReference>
<dbReference type="InterPro" id="IPR012462">
    <property type="entry name" value="UfSP1/2_DUB_cat"/>
</dbReference>
<dbReference type="InterPro" id="IPR049387">
    <property type="entry name" value="UfSP2-like_N"/>
</dbReference>
<dbReference type="PANTHER" id="PTHR48153">
    <property type="entry name" value="UFM1-SPECIFIC PROTEASE 2"/>
    <property type="match status" value="1"/>
</dbReference>
<dbReference type="PANTHER" id="PTHR48153:SF2">
    <property type="entry name" value="UFM1-SPECIFIC PROTEASE 2"/>
    <property type="match status" value="1"/>
</dbReference>
<dbReference type="Pfam" id="PF07910">
    <property type="entry name" value="Peptidase_C78"/>
    <property type="match status" value="1"/>
</dbReference>
<dbReference type="Pfam" id="PF20908">
    <property type="entry name" value="UfSP2_N"/>
    <property type="match status" value="1"/>
</dbReference>
<proteinExistence type="evidence at transcript level"/>
<protein>
    <recommendedName>
        <fullName evidence="2">Ufm1-specific protease 2</fullName>
        <shortName evidence="2">UfSP2</shortName>
        <ecNumber evidence="2">3.4.22.-</ecNumber>
    </recommendedName>
</protein>